<feature type="initiator methionine" description="Removed" evidence="3">
    <location>
        <position position="1"/>
    </location>
</feature>
<feature type="chain" id="PRO_0000079998" description="DNA damage-repair/toleration protein DRT102">
    <location>
        <begin position="2"/>
        <end position="310"/>
    </location>
</feature>
<feature type="domain" description="Cupin type-2" evidence="1">
    <location>
        <begin position="219"/>
        <end position="282"/>
    </location>
</feature>
<feature type="modified residue" description="N-acetylalanine" evidence="3">
    <location>
        <position position="2"/>
    </location>
</feature>
<dbReference type="EMBL" id="AC009465">
    <property type="protein sequence ID" value="AAG51425.1"/>
    <property type="status" value="ALT_INIT"/>
    <property type="molecule type" value="Genomic_DNA"/>
</dbReference>
<dbReference type="EMBL" id="CP002686">
    <property type="protein sequence ID" value="AEE74150.1"/>
    <property type="molecule type" value="Genomic_DNA"/>
</dbReference>
<dbReference type="EMBL" id="AY052206">
    <property type="protein sequence ID" value="AAK97677.1"/>
    <property type="molecule type" value="mRNA"/>
</dbReference>
<dbReference type="EMBL" id="AY143862">
    <property type="protein sequence ID" value="AAN28801.1"/>
    <property type="molecule type" value="mRNA"/>
</dbReference>
<dbReference type="EMBL" id="L11368">
    <property type="protein sequence ID" value="AAA72353.1"/>
    <property type="status" value="ALT_INIT"/>
    <property type="molecule type" value="mRNA"/>
</dbReference>
<dbReference type="PIR" id="S35271">
    <property type="entry name" value="S35271"/>
</dbReference>
<dbReference type="RefSeq" id="NP_566241.1">
    <property type="nucleotide sequence ID" value="NM_111360.2"/>
</dbReference>
<dbReference type="SMR" id="Q05212"/>
<dbReference type="FunCoup" id="Q05212">
    <property type="interactions" value="661"/>
</dbReference>
<dbReference type="STRING" id="3702.Q05212"/>
<dbReference type="iPTMnet" id="Q05212"/>
<dbReference type="PaxDb" id="3702-AT3G04880.1"/>
<dbReference type="ProteomicsDB" id="241255"/>
<dbReference type="EnsemblPlants" id="AT3G04880.1">
    <property type="protein sequence ID" value="AT3G04880.1"/>
    <property type="gene ID" value="AT3G04880"/>
</dbReference>
<dbReference type="GeneID" id="819648"/>
<dbReference type="Gramene" id="AT3G04880.1">
    <property type="protein sequence ID" value="AT3G04880.1"/>
    <property type="gene ID" value="AT3G04880"/>
</dbReference>
<dbReference type="KEGG" id="ath:AT3G04880"/>
<dbReference type="Araport" id="AT3G04880"/>
<dbReference type="TAIR" id="AT3G04880">
    <property type="gene designation" value="DRT102"/>
</dbReference>
<dbReference type="eggNOG" id="ENOG502QS8W">
    <property type="taxonomic scope" value="Eukaryota"/>
</dbReference>
<dbReference type="HOGENOM" id="CLU_053058_0_0_1"/>
<dbReference type="InParanoid" id="Q05212"/>
<dbReference type="OMA" id="HWDMFFD"/>
<dbReference type="PhylomeDB" id="Q05212"/>
<dbReference type="CD-CODE" id="4299E36E">
    <property type="entry name" value="Nucleolus"/>
</dbReference>
<dbReference type="PRO" id="PR:Q05212"/>
<dbReference type="Proteomes" id="UP000006548">
    <property type="component" value="Chromosome 3"/>
</dbReference>
<dbReference type="ExpressionAtlas" id="Q05212">
    <property type="expression patterns" value="baseline and differential"/>
</dbReference>
<dbReference type="GO" id="GO:0005737">
    <property type="term" value="C:cytoplasm"/>
    <property type="evidence" value="ECO:0007005"/>
    <property type="project" value="TAIR"/>
</dbReference>
<dbReference type="GO" id="GO:0005829">
    <property type="term" value="C:cytosol"/>
    <property type="evidence" value="ECO:0007005"/>
    <property type="project" value="TAIR"/>
</dbReference>
<dbReference type="GO" id="GO:0005634">
    <property type="term" value="C:nucleus"/>
    <property type="evidence" value="ECO:0007005"/>
    <property type="project" value="TAIR"/>
</dbReference>
<dbReference type="GO" id="GO:0016853">
    <property type="term" value="F:isomerase activity"/>
    <property type="evidence" value="ECO:0007669"/>
    <property type="project" value="InterPro"/>
</dbReference>
<dbReference type="GO" id="GO:0005975">
    <property type="term" value="P:carbohydrate metabolic process"/>
    <property type="evidence" value="ECO:0007669"/>
    <property type="project" value="InterPro"/>
</dbReference>
<dbReference type="GO" id="GO:0006281">
    <property type="term" value="P:DNA repair"/>
    <property type="evidence" value="ECO:0007669"/>
    <property type="project" value="UniProtKB-KW"/>
</dbReference>
<dbReference type="FunFam" id="2.60.120.10:FF:000286">
    <property type="entry name" value="DNA damage-repair/toleration protein DRT102"/>
    <property type="match status" value="1"/>
</dbReference>
<dbReference type="Gene3D" id="2.60.120.10">
    <property type="entry name" value="Jelly Rolls"/>
    <property type="match status" value="1"/>
</dbReference>
<dbReference type="Gene3D" id="3.40.1400.10">
    <property type="entry name" value="Sugar-phosphate isomerase, RpiB/LacA/LacB"/>
    <property type="match status" value="1"/>
</dbReference>
<dbReference type="InterPro" id="IPR025979">
    <property type="entry name" value="ChrR-like_cupin_dom"/>
</dbReference>
<dbReference type="InterPro" id="IPR012100">
    <property type="entry name" value="DRT102"/>
</dbReference>
<dbReference type="InterPro" id="IPR014710">
    <property type="entry name" value="RmlC-like_jellyroll"/>
</dbReference>
<dbReference type="InterPro" id="IPR011051">
    <property type="entry name" value="RmlC_Cupin_sf"/>
</dbReference>
<dbReference type="InterPro" id="IPR003500">
    <property type="entry name" value="RpiB_LacA_LacB"/>
</dbReference>
<dbReference type="InterPro" id="IPR036569">
    <property type="entry name" value="RpiB_LacA_LacB_sf"/>
</dbReference>
<dbReference type="PANTHER" id="PTHR30345:SF0">
    <property type="entry name" value="DNA DAMAGE-REPAIR_TOLERATION PROTEIN DRT102"/>
    <property type="match status" value="1"/>
</dbReference>
<dbReference type="PANTHER" id="PTHR30345">
    <property type="entry name" value="RIBOSE-5-PHOSPHATE ISOMERASE B"/>
    <property type="match status" value="1"/>
</dbReference>
<dbReference type="Pfam" id="PF12973">
    <property type="entry name" value="Cupin_7"/>
    <property type="match status" value="1"/>
</dbReference>
<dbReference type="Pfam" id="PF02502">
    <property type="entry name" value="LacAB_rpiB"/>
    <property type="match status" value="1"/>
</dbReference>
<dbReference type="PIRSF" id="PIRSF011609">
    <property type="entry name" value="DRT102"/>
    <property type="match status" value="1"/>
</dbReference>
<dbReference type="SUPFAM" id="SSF89623">
    <property type="entry name" value="Ribose/Galactose isomerase RpiB/AlsB"/>
    <property type="match status" value="1"/>
</dbReference>
<dbReference type="SUPFAM" id="SSF51182">
    <property type="entry name" value="RmlC-like cupins"/>
    <property type="match status" value="1"/>
</dbReference>
<keyword id="KW-0007">Acetylation</keyword>
<keyword id="KW-0227">DNA damage</keyword>
<keyword id="KW-0234">DNA repair</keyword>
<keyword id="KW-1185">Reference proteome</keyword>
<gene>
    <name type="primary">DRT102</name>
    <name type="ordered locus">At3g04880</name>
    <name type="ORF">T9J14.17</name>
</gene>
<proteinExistence type="evidence at protein level"/>
<organism>
    <name type="scientific">Arabidopsis thaliana</name>
    <name type="common">Mouse-ear cress</name>
    <dbReference type="NCBI Taxonomy" id="3702"/>
    <lineage>
        <taxon>Eukaryota</taxon>
        <taxon>Viridiplantae</taxon>
        <taxon>Streptophyta</taxon>
        <taxon>Embryophyta</taxon>
        <taxon>Tracheophyta</taxon>
        <taxon>Spermatophyta</taxon>
        <taxon>Magnoliopsida</taxon>
        <taxon>eudicotyledons</taxon>
        <taxon>Gunneridae</taxon>
        <taxon>Pentapetalae</taxon>
        <taxon>rosids</taxon>
        <taxon>malvids</taxon>
        <taxon>Brassicales</taxon>
        <taxon>Brassicaceae</taxon>
        <taxon>Camelineae</taxon>
        <taxon>Arabidopsis</taxon>
    </lineage>
</organism>
<evidence type="ECO:0000255" key="1"/>
<evidence type="ECO:0000305" key="2"/>
<evidence type="ECO:0007744" key="3">
    <source>
    </source>
</evidence>
<name>DR102_ARATH</name>
<sequence>MAGAVSAVDQPLKIITGADDFGASLKDAMVTHLRSLGIDVEDTGVSSYYSAGSEVGRRVSASSSSEVRGLVCCGTGVGVAMFANKFPGVYAATCLSVEDAVNARSISNCNVLAFSGIKTSPETALEIFDAWIKTPFKSPCPASGSEPWSSVISSFLDNSLSEMSQIGKSTAGDSTTKKIDETTASCVICCLAKNREFTPVDIMPGGSMKIVRETPTSAIVRFKAGSVEPAHHHTFGHDLVVIKGKKSVWNLSKKERADLVDGDYLFTPAGDVHRVKYHEDTEFFITWDGHWDIFLDEDLETAKKAIEEEA</sequence>
<accession>Q05212</accession>
<accession>Q941E8</accession>
<protein>
    <recommendedName>
        <fullName>DNA damage-repair/toleration protein DRT102</fullName>
    </recommendedName>
</protein>
<comment type="sequence caution" evidence="2">
    <conflict type="erroneous initiation">
        <sequence resource="EMBL-CDS" id="AAA72353"/>
    </conflict>
</comment>
<comment type="sequence caution" evidence="2">
    <conflict type="erroneous initiation">
        <sequence resource="EMBL-CDS" id="AAG51425"/>
    </conflict>
</comment>
<reference key="1">
    <citation type="journal article" date="2000" name="Nature">
        <title>Sequence and analysis of chromosome 3 of the plant Arabidopsis thaliana.</title>
        <authorList>
            <person name="Salanoubat M."/>
            <person name="Lemcke K."/>
            <person name="Rieger M."/>
            <person name="Ansorge W."/>
            <person name="Unseld M."/>
            <person name="Fartmann B."/>
            <person name="Valle G."/>
            <person name="Bloecker H."/>
            <person name="Perez-Alonso M."/>
            <person name="Obermaier B."/>
            <person name="Delseny M."/>
            <person name="Boutry M."/>
            <person name="Grivell L.A."/>
            <person name="Mache R."/>
            <person name="Puigdomenech P."/>
            <person name="De Simone V."/>
            <person name="Choisne N."/>
            <person name="Artiguenave F."/>
            <person name="Robert C."/>
            <person name="Brottier P."/>
            <person name="Wincker P."/>
            <person name="Cattolico L."/>
            <person name="Weissenbach J."/>
            <person name="Saurin W."/>
            <person name="Quetier F."/>
            <person name="Schaefer M."/>
            <person name="Mueller-Auer S."/>
            <person name="Gabel C."/>
            <person name="Fuchs M."/>
            <person name="Benes V."/>
            <person name="Wurmbach E."/>
            <person name="Drzonek H."/>
            <person name="Erfle H."/>
            <person name="Jordan N."/>
            <person name="Bangert S."/>
            <person name="Wiedelmann R."/>
            <person name="Kranz H."/>
            <person name="Voss H."/>
            <person name="Holland R."/>
            <person name="Brandt P."/>
            <person name="Nyakatura G."/>
            <person name="Vezzi A."/>
            <person name="D'Angelo M."/>
            <person name="Pallavicini A."/>
            <person name="Toppo S."/>
            <person name="Simionati B."/>
            <person name="Conrad A."/>
            <person name="Hornischer K."/>
            <person name="Kauer G."/>
            <person name="Loehnert T.-H."/>
            <person name="Nordsiek G."/>
            <person name="Reichelt J."/>
            <person name="Scharfe M."/>
            <person name="Schoen O."/>
            <person name="Bargues M."/>
            <person name="Terol J."/>
            <person name="Climent J."/>
            <person name="Navarro P."/>
            <person name="Collado C."/>
            <person name="Perez-Perez A."/>
            <person name="Ottenwaelder B."/>
            <person name="Duchemin D."/>
            <person name="Cooke R."/>
            <person name="Laudie M."/>
            <person name="Berger-Llauro C."/>
            <person name="Purnelle B."/>
            <person name="Masuy D."/>
            <person name="de Haan M."/>
            <person name="Maarse A.C."/>
            <person name="Alcaraz J.-P."/>
            <person name="Cottet A."/>
            <person name="Casacuberta E."/>
            <person name="Monfort A."/>
            <person name="Argiriou A."/>
            <person name="Flores M."/>
            <person name="Liguori R."/>
            <person name="Vitale D."/>
            <person name="Mannhaupt G."/>
            <person name="Haase D."/>
            <person name="Schoof H."/>
            <person name="Rudd S."/>
            <person name="Zaccaria P."/>
            <person name="Mewes H.-W."/>
            <person name="Mayer K.F.X."/>
            <person name="Kaul S."/>
            <person name="Town C.D."/>
            <person name="Koo H.L."/>
            <person name="Tallon L.J."/>
            <person name="Jenkins J."/>
            <person name="Rooney T."/>
            <person name="Rizzo M."/>
            <person name="Walts A."/>
            <person name="Utterback T."/>
            <person name="Fujii C.Y."/>
            <person name="Shea T.P."/>
            <person name="Creasy T.H."/>
            <person name="Haas B."/>
            <person name="Maiti R."/>
            <person name="Wu D."/>
            <person name="Peterson J."/>
            <person name="Van Aken S."/>
            <person name="Pai G."/>
            <person name="Militscher J."/>
            <person name="Sellers P."/>
            <person name="Gill J.E."/>
            <person name="Feldblyum T.V."/>
            <person name="Preuss D."/>
            <person name="Lin X."/>
            <person name="Nierman W.C."/>
            <person name="Salzberg S.L."/>
            <person name="White O."/>
            <person name="Venter J.C."/>
            <person name="Fraser C.M."/>
            <person name="Kaneko T."/>
            <person name="Nakamura Y."/>
            <person name="Sato S."/>
            <person name="Kato T."/>
            <person name="Asamizu E."/>
            <person name="Sasamoto S."/>
            <person name="Kimura T."/>
            <person name="Idesawa K."/>
            <person name="Kawashima K."/>
            <person name="Kishida Y."/>
            <person name="Kiyokawa C."/>
            <person name="Kohara M."/>
            <person name="Matsumoto M."/>
            <person name="Matsuno A."/>
            <person name="Muraki A."/>
            <person name="Nakayama S."/>
            <person name="Nakazaki N."/>
            <person name="Shinpo S."/>
            <person name="Takeuchi C."/>
            <person name="Wada T."/>
            <person name="Watanabe A."/>
            <person name="Yamada M."/>
            <person name="Yasuda M."/>
            <person name="Tabata S."/>
        </authorList>
    </citation>
    <scope>NUCLEOTIDE SEQUENCE [LARGE SCALE GENOMIC DNA]</scope>
    <source>
        <strain>cv. Columbia</strain>
    </source>
</reference>
<reference key="2">
    <citation type="journal article" date="2017" name="Plant J.">
        <title>Araport11: a complete reannotation of the Arabidopsis thaliana reference genome.</title>
        <authorList>
            <person name="Cheng C.Y."/>
            <person name="Krishnakumar V."/>
            <person name="Chan A.P."/>
            <person name="Thibaud-Nissen F."/>
            <person name="Schobel S."/>
            <person name="Town C.D."/>
        </authorList>
    </citation>
    <scope>GENOME REANNOTATION</scope>
    <source>
        <strain>cv. Columbia</strain>
    </source>
</reference>
<reference key="3">
    <citation type="journal article" date="2003" name="Science">
        <title>Empirical analysis of transcriptional activity in the Arabidopsis genome.</title>
        <authorList>
            <person name="Yamada K."/>
            <person name="Lim J."/>
            <person name="Dale J.M."/>
            <person name="Chen H."/>
            <person name="Shinn P."/>
            <person name="Palm C.J."/>
            <person name="Southwick A.M."/>
            <person name="Wu H.C."/>
            <person name="Kim C.J."/>
            <person name="Nguyen M."/>
            <person name="Pham P.K."/>
            <person name="Cheuk R.F."/>
            <person name="Karlin-Newmann G."/>
            <person name="Liu S.X."/>
            <person name="Lam B."/>
            <person name="Sakano H."/>
            <person name="Wu T."/>
            <person name="Yu G."/>
            <person name="Miranda M."/>
            <person name="Quach H.L."/>
            <person name="Tripp M."/>
            <person name="Chang C.H."/>
            <person name="Lee J.M."/>
            <person name="Toriumi M.J."/>
            <person name="Chan M.M."/>
            <person name="Tang C.C."/>
            <person name="Onodera C.S."/>
            <person name="Deng J.M."/>
            <person name="Akiyama K."/>
            <person name="Ansari Y."/>
            <person name="Arakawa T."/>
            <person name="Banh J."/>
            <person name="Banno F."/>
            <person name="Bowser L."/>
            <person name="Brooks S.Y."/>
            <person name="Carninci P."/>
            <person name="Chao Q."/>
            <person name="Choy N."/>
            <person name="Enju A."/>
            <person name="Goldsmith A.D."/>
            <person name="Gurjal M."/>
            <person name="Hansen N.F."/>
            <person name="Hayashizaki Y."/>
            <person name="Johnson-Hopson C."/>
            <person name="Hsuan V.W."/>
            <person name="Iida K."/>
            <person name="Karnes M."/>
            <person name="Khan S."/>
            <person name="Koesema E."/>
            <person name="Ishida J."/>
            <person name="Jiang P.X."/>
            <person name="Jones T."/>
            <person name="Kawai J."/>
            <person name="Kamiya A."/>
            <person name="Meyers C."/>
            <person name="Nakajima M."/>
            <person name="Narusaka M."/>
            <person name="Seki M."/>
            <person name="Sakurai T."/>
            <person name="Satou M."/>
            <person name="Tamse R."/>
            <person name="Vaysberg M."/>
            <person name="Wallender E.K."/>
            <person name="Wong C."/>
            <person name="Yamamura Y."/>
            <person name="Yuan S."/>
            <person name="Shinozaki K."/>
            <person name="Davis R.W."/>
            <person name="Theologis A."/>
            <person name="Ecker J.R."/>
        </authorList>
    </citation>
    <scope>NUCLEOTIDE SEQUENCE [LARGE SCALE MRNA]</scope>
    <source>
        <strain>cv. Columbia</strain>
    </source>
</reference>
<reference key="4">
    <citation type="journal article" date="1993" name="Plant Mol. Biol.">
        <title>Selection of Arabidopsis cDNAs that partially correct phenotypes of Escherichia coli DNA-damage-sensitive mutants and analysis of two plant cDNAs that appear to express UV-specific dark repair activities.</title>
        <authorList>
            <person name="Pang Q."/>
            <person name="Hays J.B."/>
            <person name="Rajagopal I."/>
            <person name="Schaefer T.S."/>
        </authorList>
    </citation>
    <scope>NUCLEOTIDE SEQUENCE [MRNA] OF 54-310</scope>
    <source>
        <strain>cv. Columbia</strain>
    </source>
</reference>
<reference key="5">
    <citation type="journal article" date="2012" name="Mol. Cell. Proteomics">
        <title>Comparative large-scale characterisation of plant vs. mammal proteins reveals similar and idiosyncratic N-alpha acetylation features.</title>
        <authorList>
            <person name="Bienvenut W.V."/>
            <person name="Sumpton D."/>
            <person name="Martinez A."/>
            <person name="Lilla S."/>
            <person name="Espagne C."/>
            <person name="Meinnel T."/>
            <person name="Giglione C."/>
        </authorList>
    </citation>
    <scope>ACETYLATION [LARGE SCALE ANALYSIS] AT ALA-2</scope>
    <scope>CLEAVAGE OF INITIATOR METHIONINE [LARGE SCALE ANALYSIS]</scope>
    <scope>IDENTIFICATION BY MASS SPECTROMETRY [LARGE SCALE ANALYSIS]</scope>
</reference>